<accession>A1A2Z2</accession>
<dbReference type="EC" id="5.4.2.10" evidence="1"/>
<dbReference type="EMBL" id="AP009256">
    <property type="protein sequence ID" value="BAF40075.1"/>
    <property type="molecule type" value="Genomic_DNA"/>
</dbReference>
<dbReference type="RefSeq" id="WP_011743613.1">
    <property type="nucleotide sequence ID" value="NZ_CAXVNC010000003.1"/>
</dbReference>
<dbReference type="SMR" id="A1A2Z2"/>
<dbReference type="STRING" id="367928.BAD_1294"/>
<dbReference type="PaxDb" id="1680-BADO_1431"/>
<dbReference type="GeneID" id="4556422"/>
<dbReference type="KEGG" id="bad:BAD_1294"/>
<dbReference type="HOGENOM" id="CLU_016950_7_0_11"/>
<dbReference type="Proteomes" id="UP000008702">
    <property type="component" value="Chromosome"/>
</dbReference>
<dbReference type="GO" id="GO:0005829">
    <property type="term" value="C:cytosol"/>
    <property type="evidence" value="ECO:0007669"/>
    <property type="project" value="TreeGrafter"/>
</dbReference>
<dbReference type="GO" id="GO:0000287">
    <property type="term" value="F:magnesium ion binding"/>
    <property type="evidence" value="ECO:0007669"/>
    <property type="project" value="UniProtKB-UniRule"/>
</dbReference>
<dbReference type="GO" id="GO:0008966">
    <property type="term" value="F:phosphoglucosamine mutase activity"/>
    <property type="evidence" value="ECO:0007669"/>
    <property type="project" value="UniProtKB-UniRule"/>
</dbReference>
<dbReference type="GO" id="GO:0004615">
    <property type="term" value="F:phosphomannomutase activity"/>
    <property type="evidence" value="ECO:0007669"/>
    <property type="project" value="TreeGrafter"/>
</dbReference>
<dbReference type="GO" id="GO:0005975">
    <property type="term" value="P:carbohydrate metabolic process"/>
    <property type="evidence" value="ECO:0007669"/>
    <property type="project" value="InterPro"/>
</dbReference>
<dbReference type="GO" id="GO:0009252">
    <property type="term" value="P:peptidoglycan biosynthetic process"/>
    <property type="evidence" value="ECO:0007669"/>
    <property type="project" value="TreeGrafter"/>
</dbReference>
<dbReference type="GO" id="GO:0006048">
    <property type="term" value="P:UDP-N-acetylglucosamine biosynthetic process"/>
    <property type="evidence" value="ECO:0007669"/>
    <property type="project" value="TreeGrafter"/>
</dbReference>
<dbReference type="CDD" id="cd05802">
    <property type="entry name" value="GlmM"/>
    <property type="match status" value="1"/>
</dbReference>
<dbReference type="FunFam" id="3.30.310.50:FF:000001">
    <property type="entry name" value="Phosphoglucosamine mutase"/>
    <property type="match status" value="1"/>
</dbReference>
<dbReference type="FunFam" id="3.40.120.10:FF:000001">
    <property type="entry name" value="Phosphoglucosamine mutase"/>
    <property type="match status" value="1"/>
</dbReference>
<dbReference type="FunFam" id="3.40.120.10:FF:000003">
    <property type="entry name" value="Phosphoglucosamine mutase"/>
    <property type="match status" value="1"/>
</dbReference>
<dbReference type="Gene3D" id="3.40.120.10">
    <property type="entry name" value="Alpha-D-Glucose-1,6-Bisphosphate, subunit A, domain 3"/>
    <property type="match status" value="3"/>
</dbReference>
<dbReference type="Gene3D" id="3.30.310.50">
    <property type="entry name" value="Alpha-D-phosphohexomutase, C-terminal domain"/>
    <property type="match status" value="1"/>
</dbReference>
<dbReference type="HAMAP" id="MF_01554_B">
    <property type="entry name" value="GlmM_B"/>
    <property type="match status" value="1"/>
</dbReference>
<dbReference type="InterPro" id="IPR005844">
    <property type="entry name" value="A-D-PHexomutase_a/b/a-I"/>
</dbReference>
<dbReference type="InterPro" id="IPR016055">
    <property type="entry name" value="A-D-PHexomutase_a/b/a-I/II/III"/>
</dbReference>
<dbReference type="InterPro" id="IPR005845">
    <property type="entry name" value="A-D-PHexomutase_a/b/a-II"/>
</dbReference>
<dbReference type="InterPro" id="IPR005846">
    <property type="entry name" value="A-D-PHexomutase_a/b/a-III"/>
</dbReference>
<dbReference type="InterPro" id="IPR005843">
    <property type="entry name" value="A-D-PHexomutase_C"/>
</dbReference>
<dbReference type="InterPro" id="IPR036900">
    <property type="entry name" value="A-D-PHexomutase_C_sf"/>
</dbReference>
<dbReference type="InterPro" id="IPR005841">
    <property type="entry name" value="Alpha-D-phosphohexomutase_SF"/>
</dbReference>
<dbReference type="InterPro" id="IPR006352">
    <property type="entry name" value="GlmM_bact"/>
</dbReference>
<dbReference type="InterPro" id="IPR050060">
    <property type="entry name" value="Phosphoglucosamine_mutase"/>
</dbReference>
<dbReference type="NCBIfam" id="TIGR01455">
    <property type="entry name" value="glmM"/>
    <property type="match status" value="1"/>
</dbReference>
<dbReference type="PANTHER" id="PTHR42946:SF1">
    <property type="entry name" value="PHOSPHOGLUCOMUTASE (ALPHA-D-GLUCOSE-1,6-BISPHOSPHATE-DEPENDENT)"/>
    <property type="match status" value="1"/>
</dbReference>
<dbReference type="PANTHER" id="PTHR42946">
    <property type="entry name" value="PHOSPHOHEXOSE MUTASE"/>
    <property type="match status" value="1"/>
</dbReference>
<dbReference type="Pfam" id="PF02878">
    <property type="entry name" value="PGM_PMM_I"/>
    <property type="match status" value="1"/>
</dbReference>
<dbReference type="Pfam" id="PF02879">
    <property type="entry name" value="PGM_PMM_II"/>
    <property type="match status" value="1"/>
</dbReference>
<dbReference type="Pfam" id="PF02880">
    <property type="entry name" value="PGM_PMM_III"/>
    <property type="match status" value="1"/>
</dbReference>
<dbReference type="Pfam" id="PF00408">
    <property type="entry name" value="PGM_PMM_IV"/>
    <property type="match status" value="1"/>
</dbReference>
<dbReference type="PRINTS" id="PR00509">
    <property type="entry name" value="PGMPMM"/>
</dbReference>
<dbReference type="SUPFAM" id="SSF55957">
    <property type="entry name" value="Phosphoglucomutase, C-terminal domain"/>
    <property type="match status" value="1"/>
</dbReference>
<dbReference type="SUPFAM" id="SSF53738">
    <property type="entry name" value="Phosphoglucomutase, first 3 domains"/>
    <property type="match status" value="3"/>
</dbReference>
<gene>
    <name evidence="1" type="primary">glmM</name>
    <name type="ordered locus">BAD_1294</name>
</gene>
<sequence length="459" mass="48355">MPRMFGTDGVRGLANRDLTAQLALDLGDAAVRVLGDDERSEFESRRRALVGRDTRVSGDFLAAALSAGMSAGGFDVIDAGIIPTPGVAYLTSVLNVEMGAVISASHNPMPDNGIKFFARGGFKLPDTKEDEIEAVLGQDWDRPTGAGVGRVSHDTATATNLYIDHLVSAIAPVGPDKSQPTPLKGLKIVADCANGATSVVAPEALRRAGADVTVINASPDGYNINKNAGSTHPEQLQAMVKASGAVMGVAFDGDADRCLAVDEDGNMVNGDQIMGILARAKKNAGKLNHDTLVVTVMSNLGLKLALRSMGIKTVQTNVGDRYVLEEMLRGDYSLGGEQSGHVINREFATTGDGTLTALTLCNEVVKSGKSLKELAADFPQLPQTLINVPNVDKMAAKTNAKVQAAVEREEKLLGDTGRVLLRPSGTEPLVRVMAEAETQQQADEVCDRLAKVVADELTL</sequence>
<proteinExistence type="inferred from homology"/>
<comment type="function">
    <text evidence="1">Catalyzes the conversion of glucosamine-6-phosphate to glucosamine-1-phosphate.</text>
</comment>
<comment type="catalytic activity">
    <reaction evidence="1">
        <text>alpha-D-glucosamine 1-phosphate = D-glucosamine 6-phosphate</text>
        <dbReference type="Rhea" id="RHEA:23424"/>
        <dbReference type="ChEBI" id="CHEBI:58516"/>
        <dbReference type="ChEBI" id="CHEBI:58725"/>
        <dbReference type="EC" id="5.4.2.10"/>
    </reaction>
</comment>
<comment type="cofactor">
    <cofactor evidence="1">
        <name>Mg(2+)</name>
        <dbReference type="ChEBI" id="CHEBI:18420"/>
    </cofactor>
    <text evidence="1">Binds 1 Mg(2+) ion per subunit.</text>
</comment>
<comment type="PTM">
    <text evidence="1">Activated by phosphorylation.</text>
</comment>
<comment type="similarity">
    <text evidence="1">Belongs to the phosphohexose mutase family.</text>
</comment>
<organism>
    <name type="scientific">Bifidobacterium adolescentis (strain ATCC 15703 / DSM 20083 / NCTC 11814 / E194a)</name>
    <dbReference type="NCBI Taxonomy" id="367928"/>
    <lineage>
        <taxon>Bacteria</taxon>
        <taxon>Bacillati</taxon>
        <taxon>Actinomycetota</taxon>
        <taxon>Actinomycetes</taxon>
        <taxon>Bifidobacteriales</taxon>
        <taxon>Bifidobacteriaceae</taxon>
        <taxon>Bifidobacterium</taxon>
    </lineage>
</organism>
<evidence type="ECO:0000255" key="1">
    <source>
        <dbReference type="HAMAP-Rule" id="MF_01554"/>
    </source>
</evidence>
<keyword id="KW-0413">Isomerase</keyword>
<keyword id="KW-0460">Magnesium</keyword>
<keyword id="KW-0479">Metal-binding</keyword>
<keyword id="KW-0597">Phosphoprotein</keyword>
<keyword id="KW-1185">Reference proteome</keyword>
<reference key="1">
    <citation type="submission" date="2006-12" db="EMBL/GenBank/DDBJ databases">
        <title>Bifidobacterium adolescentis complete genome sequence.</title>
        <authorList>
            <person name="Suzuki T."/>
            <person name="Tsuda Y."/>
            <person name="Kanou N."/>
            <person name="Inoue T."/>
            <person name="Kumazaki K."/>
            <person name="Nagano S."/>
            <person name="Hirai S."/>
            <person name="Tanaka K."/>
            <person name="Watanabe K."/>
        </authorList>
    </citation>
    <scope>NUCLEOTIDE SEQUENCE [LARGE SCALE GENOMIC DNA]</scope>
    <source>
        <strain>ATCC 15703 / DSM 20083 / NCTC 11814 / E194a</strain>
    </source>
</reference>
<name>GLMM_BIFAA</name>
<protein>
    <recommendedName>
        <fullName evidence="1">Phosphoglucosamine mutase</fullName>
        <ecNumber evidence="1">5.4.2.10</ecNumber>
    </recommendedName>
</protein>
<feature type="chain" id="PRO_0000301282" description="Phosphoglucosamine mutase">
    <location>
        <begin position="1"/>
        <end position="459"/>
    </location>
</feature>
<feature type="active site" description="Phosphoserine intermediate" evidence="1">
    <location>
        <position position="105"/>
    </location>
</feature>
<feature type="binding site" description="via phosphate group" evidence="1">
    <location>
        <position position="105"/>
    </location>
    <ligand>
        <name>Mg(2+)</name>
        <dbReference type="ChEBI" id="CHEBI:18420"/>
    </ligand>
</feature>
<feature type="binding site" evidence="1">
    <location>
        <position position="252"/>
    </location>
    <ligand>
        <name>Mg(2+)</name>
        <dbReference type="ChEBI" id="CHEBI:18420"/>
    </ligand>
</feature>
<feature type="binding site" evidence="1">
    <location>
        <position position="254"/>
    </location>
    <ligand>
        <name>Mg(2+)</name>
        <dbReference type="ChEBI" id="CHEBI:18420"/>
    </ligand>
</feature>
<feature type="binding site" evidence="1">
    <location>
        <position position="256"/>
    </location>
    <ligand>
        <name>Mg(2+)</name>
        <dbReference type="ChEBI" id="CHEBI:18420"/>
    </ligand>
</feature>
<feature type="modified residue" description="Phosphoserine" evidence="1">
    <location>
        <position position="105"/>
    </location>
</feature>